<comment type="similarity">
    <text evidence="1">Belongs to the small heat shock protein (HSP20) family.</text>
</comment>
<reference key="1">
    <citation type="journal article" date="2005" name="PLoS Biol.">
        <title>The genome sequence of Rickettsia felis identifies the first putative conjugative plasmid in an obligate intracellular parasite.</title>
        <authorList>
            <person name="Ogata H."/>
            <person name="Renesto P."/>
            <person name="Audic S."/>
            <person name="Robert C."/>
            <person name="Blanc G."/>
            <person name="Fournier P.-E."/>
            <person name="Parinello H."/>
            <person name="Claverie J.-M."/>
            <person name="Raoult D."/>
        </authorList>
    </citation>
    <scope>NUCLEOTIDE SEQUENCE [LARGE SCALE GENOMIC DNA]</scope>
    <source>
        <strain>ATCC VR-1525 / URRWXCal2</strain>
        <plasmid>pRF</plasmid>
        <plasmid>pRFdelta</plasmid>
    </source>
</reference>
<proteinExistence type="inferred from homology"/>
<accession>Q4UJB1</accession>
<dbReference type="EMBL" id="CP000054">
    <property type="protein sequence ID" value="AAY62302.1"/>
    <property type="molecule type" value="Genomic_DNA"/>
</dbReference>
<dbReference type="EMBL" id="CP000055">
    <property type="protein sequence ID" value="AAY62346.1"/>
    <property type="molecule type" value="Genomic_DNA"/>
</dbReference>
<dbReference type="SMR" id="Q4UJB1"/>
<dbReference type="KEGG" id="rfe:RF_p51"/>
<dbReference type="KEGG" id="rfe:RF_pd51"/>
<dbReference type="HOGENOM" id="CLU_046737_8_4_5"/>
<dbReference type="Proteomes" id="UP000008548">
    <property type="component" value="Plasmid pRF"/>
</dbReference>
<dbReference type="Proteomes" id="UP000008548">
    <property type="component" value="Plasmid pRFdelta"/>
</dbReference>
<dbReference type="CDD" id="cd06464">
    <property type="entry name" value="ACD_sHsps-like"/>
    <property type="match status" value="1"/>
</dbReference>
<dbReference type="Gene3D" id="2.60.40.790">
    <property type="match status" value="1"/>
</dbReference>
<dbReference type="InterPro" id="IPR002068">
    <property type="entry name" value="A-crystallin/Hsp20_dom"/>
</dbReference>
<dbReference type="InterPro" id="IPR007052">
    <property type="entry name" value="CS_dom"/>
</dbReference>
<dbReference type="InterPro" id="IPR008978">
    <property type="entry name" value="HSP20-like_chaperone"/>
</dbReference>
<dbReference type="InterPro" id="IPR031107">
    <property type="entry name" value="Small_HSP"/>
</dbReference>
<dbReference type="PANTHER" id="PTHR11527">
    <property type="entry name" value="HEAT-SHOCK PROTEIN 20 FAMILY MEMBER"/>
    <property type="match status" value="1"/>
</dbReference>
<dbReference type="Pfam" id="PF00011">
    <property type="entry name" value="HSP20"/>
    <property type="match status" value="1"/>
</dbReference>
<dbReference type="SUPFAM" id="SSF49764">
    <property type="entry name" value="HSP20-like chaperones"/>
    <property type="match status" value="1"/>
</dbReference>
<dbReference type="PROSITE" id="PS01031">
    <property type="entry name" value="SHSP"/>
    <property type="match status" value="1"/>
</dbReference>
<gene>
    <name type="primary">hspc4-1</name>
    <name type="synonym">hspP2-1</name>
    <name type="ordered locus">RF_p51</name>
</gene>
<gene>
    <name type="primary">hspc4-2</name>
    <name type="synonym">hspP2-2</name>
    <name type="ordered locus">RF_pd51</name>
</gene>
<feature type="chain" id="PRO_0000288743" description="Small heat shock protein C4">
    <location>
        <begin position="1"/>
        <end position="163"/>
    </location>
</feature>
<feature type="domain" description="sHSP" evidence="1">
    <location>
        <begin position="53"/>
        <end position="163"/>
    </location>
</feature>
<sequence>MFNKLMEVLMSFNLPRIRNKSELQHHTNKQSYVDDVFNNFFNEIASFSYPTHYNNKILSPRTDITENESEYHLEVELPGVTQDNIDLKIDSNILTIDGKKEQSTEKKDHNYHMKERYYGSFSRSISLPSNVDEEHVTANFKDGILSIKIPKKEQSKAKKIKIS</sequence>
<organism>
    <name type="scientific">Rickettsia felis (strain ATCC VR-1525 / URRWXCal2)</name>
    <name type="common">Rickettsia azadi</name>
    <dbReference type="NCBI Taxonomy" id="315456"/>
    <lineage>
        <taxon>Bacteria</taxon>
        <taxon>Pseudomonadati</taxon>
        <taxon>Pseudomonadota</taxon>
        <taxon>Alphaproteobacteria</taxon>
        <taxon>Rickettsiales</taxon>
        <taxon>Rickettsiaceae</taxon>
        <taxon>Rickettsieae</taxon>
        <taxon>Rickettsia</taxon>
        <taxon>spotted fever group</taxon>
    </lineage>
</organism>
<keyword id="KW-0614">Plasmid</keyword>
<keyword id="KW-0346">Stress response</keyword>
<evidence type="ECO:0000255" key="1">
    <source>
        <dbReference type="PROSITE-ProRule" id="PRU00285"/>
    </source>
</evidence>
<name>HSPC4_RICFE</name>
<protein>
    <recommendedName>
        <fullName>Small heat shock protein C4</fullName>
    </recommendedName>
</protein>
<geneLocation type="plasmid">
    <name>pRFdelta</name>
</geneLocation>
<geneLocation type="plasmid">
    <name>pRF</name>
</geneLocation>